<gene>
    <name type="primary">ayr1</name>
    <name type="ORF">SPAC23D3.11</name>
</gene>
<comment type="function">
    <text evidence="3">Can convert acyl and alkyl dihydroxyacetone-phosphate (DHAP) into glycerolipids and ether lipids, respectively. Required for the biosynthesis of phosphatidic acid via the DHAP pathway, where it reduces 1-acyl DHAP to lysophosphatidic acid (LPA). Also has triacylglycerol (TAG) lipase activity. Involved in the mobilization of the non-polar storage lipids triacylglycerols (TAGs) from lipid particles by hydrolysis of TAGs. Lipolysis of TAG by AYR1 is essential for starvation-induced autophagy. Forms an NADPH-regulated cation-selective channel in the mitochondrial outer membrane.</text>
</comment>
<comment type="catalytic activity">
    <reaction evidence="3">
        <text>1-hexadecanoyl-sn-glycero-3-phosphate + NADP(+) = 1-hexadecanoylglycerone 3-phosphate + NADPH + H(+)</text>
        <dbReference type="Rhea" id="RHEA:17341"/>
        <dbReference type="ChEBI" id="CHEBI:15378"/>
        <dbReference type="ChEBI" id="CHEBI:57518"/>
        <dbReference type="ChEBI" id="CHEBI:57783"/>
        <dbReference type="ChEBI" id="CHEBI:58303"/>
        <dbReference type="ChEBI" id="CHEBI:58349"/>
        <dbReference type="EC" id="1.1.1.101"/>
    </reaction>
</comment>
<comment type="catalytic activity">
    <reaction evidence="3">
        <text>a 1-acylglycerone 3-phosphate + NADPH + H(+) = a 1-acyl-sn-glycero-3-phosphate + NADP(+)</text>
        <dbReference type="Rhea" id="RHEA:33375"/>
        <dbReference type="ChEBI" id="CHEBI:15378"/>
        <dbReference type="ChEBI" id="CHEBI:57534"/>
        <dbReference type="ChEBI" id="CHEBI:57783"/>
        <dbReference type="ChEBI" id="CHEBI:57970"/>
        <dbReference type="ChEBI" id="CHEBI:58349"/>
    </reaction>
    <physiologicalReaction direction="left-to-right" evidence="3">
        <dbReference type="Rhea" id="RHEA:33376"/>
    </physiologicalReaction>
</comment>
<comment type="catalytic activity">
    <reaction evidence="3">
        <text>a triacylglycerol + H2O = a diacylglycerol + a fatty acid + H(+)</text>
        <dbReference type="Rhea" id="RHEA:12044"/>
        <dbReference type="ChEBI" id="CHEBI:15377"/>
        <dbReference type="ChEBI" id="CHEBI:15378"/>
        <dbReference type="ChEBI" id="CHEBI:17855"/>
        <dbReference type="ChEBI" id="CHEBI:18035"/>
        <dbReference type="ChEBI" id="CHEBI:28868"/>
        <dbReference type="EC" id="3.1.1.3"/>
    </reaction>
    <physiologicalReaction direction="left-to-right" evidence="3">
        <dbReference type="Rhea" id="RHEA:12045"/>
    </physiologicalReaction>
</comment>
<comment type="subcellular location">
    <subcellularLocation>
        <location evidence="3">Lipid droplet</location>
    </subcellularLocation>
    <subcellularLocation>
        <location evidence="4">Cytoplasm</location>
    </subcellularLocation>
    <subcellularLocation>
        <location evidence="4">Vacuole</location>
    </subcellularLocation>
    <subcellularLocation>
        <location evidence="4">Endoplasmic reticulum</location>
    </subcellularLocation>
    <subcellularLocation>
        <location evidence="4">Golgi apparatus</location>
    </subcellularLocation>
    <subcellularLocation>
        <location evidence="3">Mitochondrion outer membrane</location>
    </subcellularLocation>
</comment>
<comment type="similarity">
    <text evidence="5">Belongs to the short-chain dehydrogenases/reductases (SDR) family.</text>
</comment>
<keyword id="KW-0963">Cytoplasm</keyword>
<keyword id="KW-0256">Endoplasmic reticulum</keyword>
<keyword id="KW-0333">Golgi apparatus</keyword>
<keyword id="KW-0378">Hydrolase</keyword>
<keyword id="KW-0442">Lipid degradation</keyword>
<keyword id="KW-0551">Lipid droplet</keyword>
<keyword id="KW-0443">Lipid metabolism</keyword>
<keyword id="KW-0472">Membrane</keyword>
<keyword id="KW-0496">Mitochondrion</keyword>
<keyword id="KW-1000">Mitochondrion outer membrane</keyword>
<keyword id="KW-0521">NADP</keyword>
<keyword id="KW-0560">Oxidoreductase</keyword>
<keyword id="KW-1185">Reference proteome</keyword>
<keyword id="KW-0926">Vacuole</keyword>
<feature type="chain" id="PRO_0000054874" description="NADPH-dependent 1-acyldihydroxyacetone phosphate reductase">
    <location>
        <begin position="1"/>
        <end position="296"/>
    </location>
</feature>
<feature type="short sequence motif" description="GXSXG" evidence="3">
    <location>
        <begin position="11"/>
        <end position="15"/>
    </location>
</feature>
<feature type="active site" description="Proton donor" evidence="2">
    <location>
        <position position="148"/>
    </location>
</feature>
<feature type="active site" description="Lowers pKa of active site Tyr" evidence="2">
    <location>
        <position position="152"/>
    </location>
</feature>
<feature type="binding site" evidence="1">
    <location>
        <position position="9"/>
    </location>
    <ligand>
        <name>NADP(+)</name>
        <dbReference type="ChEBI" id="CHEBI:58349"/>
    </ligand>
</feature>
<feature type="binding site" evidence="1">
    <location>
        <position position="35"/>
    </location>
    <ligand>
        <name>NADP(+)</name>
        <dbReference type="ChEBI" id="CHEBI:58349"/>
    </ligand>
</feature>
<feature type="binding site" evidence="1">
    <location>
        <position position="41"/>
    </location>
    <ligand>
        <name>NADP(+)</name>
        <dbReference type="ChEBI" id="CHEBI:58349"/>
    </ligand>
</feature>
<feature type="binding site" evidence="1">
    <location>
        <position position="56"/>
    </location>
    <ligand>
        <name>NADP(+)</name>
        <dbReference type="ChEBI" id="CHEBI:58349"/>
    </ligand>
</feature>
<feature type="binding site" evidence="2">
    <location>
        <position position="84"/>
    </location>
    <ligand>
        <name>NADP(+)</name>
        <dbReference type="ChEBI" id="CHEBI:58349"/>
    </ligand>
</feature>
<feature type="binding site" evidence="1">
    <location>
        <position position="117"/>
    </location>
    <ligand>
        <name>NADP(+)</name>
        <dbReference type="ChEBI" id="CHEBI:58349"/>
    </ligand>
</feature>
<feature type="binding site" evidence="2">
    <location>
        <position position="148"/>
    </location>
    <ligand>
        <name>NADP(+)</name>
        <dbReference type="ChEBI" id="CHEBI:58349"/>
    </ligand>
</feature>
<feature type="binding site" evidence="2">
    <location>
        <position position="152"/>
    </location>
    <ligand>
        <name>NADP(+)</name>
        <dbReference type="ChEBI" id="CHEBI:58349"/>
    </ligand>
</feature>
<feature type="binding site" evidence="2">
    <location>
        <position position="181"/>
    </location>
    <ligand>
        <name>NADP(+)</name>
        <dbReference type="ChEBI" id="CHEBI:58349"/>
    </ligand>
</feature>
<feature type="binding site" evidence="1">
    <location>
        <position position="183"/>
    </location>
    <ligand>
        <name>NADP(+)</name>
        <dbReference type="ChEBI" id="CHEBI:58349"/>
    </ligand>
</feature>
<reference key="1">
    <citation type="journal article" date="2002" name="Nature">
        <title>The genome sequence of Schizosaccharomyces pombe.</title>
        <authorList>
            <person name="Wood V."/>
            <person name="Gwilliam R."/>
            <person name="Rajandream M.A."/>
            <person name="Lyne M.H."/>
            <person name="Lyne R."/>
            <person name="Stewart A."/>
            <person name="Sgouros J.G."/>
            <person name="Peat N."/>
            <person name="Hayles J."/>
            <person name="Baker S.G."/>
            <person name="Basham D."/>
            <person name="Bowman S."/>
            <person name="Brooks K."/>
            <person name="Brown D."/>
            <person name="Brown S."/>
            <person name="Chillingworth T."/>
            <person name="Churcher C.M."/>
            <person name="Collins M."/>
            <person name="Connor R."/>
            <person name="Cronin A."/>
            <person name="Davis P."/>
            <person name="Feltwell T."/>
            <person name="Fraser A."/>
            <person name="Gentles S."/>
            <person name="Goble A."/>
            <person name="Hamlin N."/>
            <person name="Harris D.E."/>
            <person name="Hidalgo J."/>
            <person name="Hodgson G."/>
            <person name="Holroyd S."/>
            <person name="Hornsby T."/>
            <person name="Howarth S."/>
            <person name="Huckle E.J."/>
            <person name="Hunt S."/>
            <person name="Jagels K."/>
            <person name="James K.D."/>
            <person name="Jones L."/>
            <person name="Jones M."/>
            <person name="Leather S."/>
            <person name="McDonald S."/>
            <person name="McLean J."/>
            <person name="Mooney P."/>
            <person name="Moule S."/>
            <person name="Mungall K.L."/>
            <person name="Murphy L.D."/>
            <person name="Niblett D."/>
            <person name="Odell C."/>
            <person name="Oliver K."/>
            <person name="O'Neil S."/>
            <person name="Pearson D."/>
            <person name="Quail M.A."/>
            <person name="Rabbinowitsch E."/>
            <person name="Rutherford K.M."/>
            <person name="Rutter S."/>
            <person name="Saunders D."/>
            <person name="Seeger K."/>
            <person name="Sharp S."/>
            <person name="Skelton J."/>
            <person name="Simmonds M.N."/>
            <person name="Squares R."/>
            <person name="Squares S."/>
            <person name="Stevens K."/>
            <person name="Taylor K."/>
            <person name="Taylor R.G."/>
            <person name="Tivey A."/>
            <person name="Walsh S.V."/>
            <person name="Warren T."/>
            <person name="Whitehead S."/>
            <person name="Woodward J.R."/>
            <person name="Volckaert G."/>
            <person name="Aert R."/>
            <person name="Robben J."/>
            <person name="Grymonprez B."/>
            <person name="Weltjens I."/>
            <person name="Vanstreels E."/>
            <person name="Rieger M."/>
            <person name="Schaefer M."/>
            <person name="Mueller-Auer S."/>
            <person name="Gabel C."/>
            <person name="Fuchs M."/>
            <person name="Duesterhoeft A."/>
            <person name="Fritzc C."/>
            <person name="Holzer E."/>
            <person name="Moestl D."/>
            <person name="Hilbert H."/>
            <person name="Borzym K."/>
            <person name="Langer I."/>
            <person name="Beck A."/>
            <person name="Lehrach H."/>
            <person name="Reinhardt R."/>
            <person name="Pohl T.M."/>
            <person name="Eger P."/>
            <person name="Zimmermann W."/>
            <person name="Wedler H."/>
            <person name="Wambutt R."/>
            <person name="Purnelle B."/>
            <person name="Goffeau A."/>
            <person name="Cadieu E."/>
            <person name="Dreano S."/>
            <person name="Gloux S."/>
            <person name="Lelaure V."/>
            <person name="Mottier S."/>
            <person name="Galibert F."/>
            <person name="Aves S.J."/>
            <person name="Xiang Z."/>
            <person name="Hunt C."/>
            <person name="Moore K."/>
            <person name="Hurst S.M."/>
            <person name="Lucas M."/>
            <person name="Rochet M."/>
            <person name="Gaillardin C."/>
            <person name="Tallada V.A."/>
            <person name="Garzon A."/>
            <person name="Thode G."/>
            <person name="Daga R.R."/>
            <person name="Cruzado L."/>
            <person name="Jimenez J."/>
            <person name="Sanchez M."/>
            <person name="del Rey F."/>
            <person name="Benito J."/>
            <person name="Dominguez A."/>
            <person name="Revuelta J.L."/>
            <person name="Moreno S."/>
            <person name="Armstrong J."/>
            <person name="Forsburg S.L."/>
            <person name="Cerutti L."/>
            <person name="Lowe T."/>
            <person name="McCombie W.R."/>
            <person name="Paulsen I."/>
            <person name="Potashkin J."/>
            <person name="Shpakovski G.V."/>
            <person name="Ussery D."/>
            <person name="Barrell B.G."/>
            <person name="Nurse P."/>
        </authorList>
    </citation>
    <scope>NUCLEOTIDE SEQUENCE [LARGE SCALE GENOMIC DNA]</scope>
    <source>
        <strain>972 / ATCC 24843</strain>
    </source>
</reference>
<reference key="2">
    <citation type="journal article" date="2006" name="Nat. Biotechnol.">
        <title>ORFeome cloning and global analysis of protein localization in the fission yeast Schizosaccharomyces pombe.</title>
        <authorList>
            <person name="Matsuyama A."/>
            <person name="Arai R."/>
            <person name="Yashiroda Y."/>
            <person name="Shirai A."/>
            <person name="Kamata A."/>
            <person name="Sekido S."/>
            <person name="Kobayashi Y."/>
            <person name="Hashimoto A."/>
            <person name="Hamamoto M."/>
            <person name="Hiraoka Y."/>
            <person name="Horinouchi S."/>
            <person name="Yoshida M."/>
        </authorList>
    </citation>
    <scope>SUBCELLULAR LOCATION [LARGE SCALE ANALYSIS]</scope>
</reference>
<evidence type="ECO:0000250" key="1">
    <source>
        <dbReference type="UniProtKB" id="L0E2Z4"/>
    </source>
</evidence>
<evidence type="ECO:0000250" key="2">
    <source>
        <dbReference type="UniProtKB" id="O93868"/>
    </source>
</evidence>
<evidence type="ECO:0000250" key="3">
    <source>
        <dbReference type="UniProtKB" id="P40471"/>
    </source>
</evidence>
<evidence type="ECO:0000269" key="4">
    <source>
    </source>
</evidence>
<evidence type="ECO:0000305" key="5"/>
<proteinExistence type="inferred from homology"/>
<sequence length="296" mass="32731">MEAEKFVLITGCSEGGIGNALALKFHQEGFQVLATARQVERMDNLTKAGLQTLKLDVTDEDSVREVEQEVRKFTNGSLHYLINNAGAPCSAPAIDLDIEDVSKVMDVNFYGVIRMNKAFQHQLIRAKGTIVNVNSLVSYVPFAFNAAYNASKAALLAYSNTLRIELAPFGVQVTSIMTGGVQTKIQSKPLGTMTEAAIPENSIYYPYRKLILENRNPVEKFVTIEEFADAAYPQLVGRGRWYQLFKPGVRPAQIWAGYMSSAGRVGSMLPVEVFSMSVRLIVKLPSTAVWRDHTVD</sequence>
<protein>
    <recommendedName>
        <fullName>NADPH-dependent 1-acyldihydroxyacetone phosphate reductase</fullName>
        <shortName>ADR</shortName>
        <ecNumber>1.1.1.101</ecNumber>
    </recommendedName>
    <alternativeName>
        <fullName>1-acyl DHAP reductase</fullName>
    </alternativeName>
    <alternativeName>
        <fullName>Acyl/alkyl DHAP reductase</fullName>
    </alternativeName>
    <alternativeName>
        <fullName>Acylglycerone-phosphate reductase</fullName>
    </alternativeName>
    <alternativeName>
        <fullName>Triacylglycerol lipase ayr1</fullName>
        <shortName>TAG lipase</shortName>
        <ecNumber evidence="3">3.1.1.3</ecNumber>
    </alternativeName>
</protein>
<organism>
    <name type="scientific">Schizosaccharomyces pombe (strain 972 / ATCC 24843)</name>
    <name type="common">Fission yeast</name>
    <dbReference type="NCBI Taxonomy" id="284812"/>
    <lineage>
        <taxon>Eukaryota</taxon>
        <taxon>Fungi</taxon>
        <taxon>Dikarya</taxon>
        <taxon>Ascomycota</taxon>
        <taxon>Taphrinomycotina</taxon>
        <taxon>Schizosaccharomycetes</taxon>
        <taxon>Schizosaccharomycetales</taxon>
        <taxon>Schizosaccharomycetaceae</taxon>
        <taxon>Schizosaccharomyces</taxon>
    </lineage>
</organism>
<name>AYR1_SCHPO</name>
<dbReference type="EC" id="1.1.1.101"/>
<dbReference type="EC" id="3.1.1.3" evidence="3"/>
<dbReference type="EMBL" id="CU329670">
    <property type="protein sequence ID" value="CAA91246.1"/>
    <property type="molecule type" value="Genomic_DNA"/>
</dbReference>
<dbReference type="PIR" id="S62502">
    <property type="entry name" value="S62502"/>
</dbReference>
<dbReference type="RefSeq" id="NP_594548.1">
    <property type="nucleotide sequence ID" value="NM_001019977.2"/>
</dbReference>
<dbReference type="SMR" id="Q09851"/>
<dbReference type="BioGRID" id="277991">
    <property type="interactions" value="7"/>
</dbReference>
<dbReference type="FunCoup" id="Q09851">
    <property type="interactions" value="107"/>
</dbReference>
<dbReference type="STRING" id="284812.Q09851"/>
<dbReference type="iPTMnet" id="Q09851"/>
<dbReference type="PaxDb" id="4896-SPAC23D3.11.1"/>
<dbReference type="EnsemblFungi" id="SPAC23D3.11.1">
    <property type="protein sequence ID" value="SPAC23D3.11.1:pep"/>
    <property type="gene ID" value="SPAC23D3.11"/>
</dbReference>
<dbReference type="GeneID" id="2541489"/>
<dbReference type="KEGG" id="spo:2541489"/>
<dbReference type="PomBase" id="SPAC23D3.11">
    <property type="gene designation" value="ayr1"/>
</dbReference>
<dbReference type="VEuPathDB" id="FungiDB:SPAC23D3.11"/>
<dbReference type="eggNOG" id="KOG1209">
    <property type="taxonomic scope" value="Eukaryota"/>
</dbReference>
<dbReference type="HOGENOM" id="CLU_010194_2_9_1"/>
<dbReference type="InParanoid" id="Q09851"/>
<dbReference type="OMA" id="WISYYLP"/>
<dbReference type="PhylomeDB" id="Q09851"/>
<dbReference type="PRO" id="PR:Q09851"/>
<dbReference type="Proteomes" id="UP000002485">
    <property type="component" value="Chromosome I"/>
</dbReference>
<dbReference type="GO" id="GO:0005737">
    <property type="term" value="C:cytoplasm"/>
    <property type="evidence" value="ECO:0007005"/>
    <property type="project" value="PomBase"/>
</dbReference>
<dbReference type="GO" id="GO:0005783">
    <property type="term" value="C:endoplasmic reticulum"/>
    <property type="evidence" value="ECO:0007005"/>
    <property type="project" value="PomBase"/>
</dbReference>
<dbReference type="GO" id="GO:0000329">
    <property type="term" value="C:fungal-type vacuole membrane"/>
    <property type="evidence" value="ECO:0007005"/>
    <property type="project" value="PomBase"/>
</dbReference>
<dbReference type="GO" id="GO:0005794">
    <property type="term" value="C:Golgi apparatus"/>
    <property type="evidence" value="ECO:0007005"/>
    <property type="project" value="PomBase"/>
</dbReference>
<dbReference type="GO" id="GO:0005811">
    <property type="term" value="C:lipid droplet"/>
    <property type="evidence" value="ECO:0000318"/>
    <property type="project" value="GO_Central"/>
</dbReference>
<dbReference type="GO" id="GO:0005741">
    <property type="term" value="C:mitochondrial outer membrane"/>
    <property type="evidence" value="ECO:0007669"/>
    <property type="project" value="UniProtKB-SubCell"/>
</dbReference>
<dbReference type="GO" id="GO:0005739">
    <property type="term" value="C:mitochondrion"/>
    <property type="evidence" value="ECO:0000266"/>
    <property type="project" value="PomBase"/>
</dbReference>
<dbReference type="GO" id="GO:0000140">
    <property type="term" value="F:acylglycerone-phosphate reductase (NADP+) activity"/>
    <property type="evidence" value="ECO:0000318"/>
    <property type="project" value="GO_Central"/>
</dbReference>
<dbReference type="GO" id="GO:0004806">
    <property type="term" value="F:triacylglycerol lipase activity"/>
    <property type="evidence" value="ECO:0000318"/>
    <property type="project" value="GO_Central"/>
</dbReference>
<dbReference type="GO" id="GO:0006654">
    <property type="term" value="P:phosphatidic acid biosynthetic process"/>
    <property type="evidence" value="ECO:0000318"/>
    <property type="project" value="GO_Central"/>
</dbReference>
<dbReference type="GO" id="GO:0019433">
    <property type="term" value="P:triglyceride catabolic process"/>
    <property type="evidence" value="ECO:0000318"/>
    <property type="project" value="GO_Central"/>
</dbReference>
<dbReference type="CDD" id="cd05374">
    <property type="entry name" value="17beta-HSD-like_SDR_c"/>
    <property type="match status" value="1"/>
</dbReference>
<dbReference type="Gene3D" id="3.40.50.720">
    <property type="entry name" value="NAD(P)-binding Rossmann-like Domain"/>
    <property type="match status" value="1"/>
</dbReference>
<dbReference type="InterPro" id="IPR036291">
    <property type="entry name" value="NAD(P)-bd_dom_sf"/>
</dbReference>
<dbReference type="InterPro" id="IPR020904">
    <property type="entry name" value="Sc_DH/Rdtase_CS"/>
</dbReference>
<dbReference type="InterPro" id="IPR002347">
    <property type="entry name" value="SDR_fam"/>
</dbReference>
<dbReference type="PANTHER" id="PTHR44169">
    <property type="entry name" value="NADPH-DEPENDENT 1-ACYLDIHYDROXYACETONE PHOSPHATE REDUCTASE"/>
    <property type="match status" value="1"/>
</dbReference>
<dbReference type="PANTHER" id="PTHR44169:SF6">
    <property type="entry name" value="NADPH-DEPENDENT 1-ACYLDIHYDROXYACETONE PHOSPHATE REDUCTASE"/>
    <property type="match status" value="1"/>
</dbReference>
<dbReference type="Pfam" id="PF00106">
    <property type="entry name" value="adh_short"/>
    <property type="match status" value="1"/>
</dbReference>
<dbReference type="PRINTS" id="PR00081">
    <property type="entry name" value="GDHRDH"/>
</dbReference>
<dbReference type="PRINTS" id="PR00080">
    <property type="entry name" value="SDRFAMILY"/>
</dbReference>
<dbReference type="SUPFAM" id="SSF51735">
    <property type="entry name" value="NAD(P)-binding Rossmann-fold domains"/>
    <property type="match status" value="1"/>
</dbReference>
<dbReference type="PROSITE" id="PS00061">
    <property type="entry name" value="ADH_SHORT"/>
    <property type="match status" value="1"/>
</dbReference>
<accession>Q09851</accession>